<name>GBMOR_PSEAE</name>
<keyword id="KW-0001">2Fe-2S</keyword>
<keyword id="KW-0274">FAD</keyword>
<keyword id="KW-0285">Flavoprotein</keyword>
<keyword id="KW-0408">Iron</keyword>
<keyword id="KW-0411">Iron-sulfur</keyword>
<keyword id="KW-0479">Metal-binding</keyword>
<keyword id="KW-0503">Monooxygenase</keyword>
<keyword id="KW-0560">Oxidoreductase</keyword>
<keyword id="KW-1185">Reference proteome</keyword>
<comment type="function">
    <text evidence="4 6 7">Involved in degradation of glycine betaine (PubMed:17951379). Part of a Rieske-type oxygenase system that catalyzes the conversion of glycine betaine (GB) to dimethylglycine (DMG) (Probable). This subunit is the ferredoxin reductase component of the system (Probable). Required for growth on choline and GB, but not for growth on DMG (PubMed:17951379).</text>
</comment>
<comment type="catalytic activity">
    <reaction evidence="1">
        <text>glycine betaine + NADH + O2 + H(+) = N,N-dimethylglycine + formaldehyde + NAD(+) + H2O</text>
        <dbReference type="Rhea" id="RHEA:45700"/>
        <dbReference type="ChEBI" id="CHEBI:15377"/>
        <dbReference type="ChEBI" id="CHEBI:15378"/>
        <dbReference type="ChEBI" id="CHEBI:15379"/>
        <dbReference type="ChEBI" id="CHEBI:16842"/>
        <dbReference type="ChEBI" id="CHEBI:17750"/>
        <dbReference type="ChEBI" id="CHEBI:57540"/>
        <dbReference type="ChEBI" id="CHEBI:57945"/>
        <dbReference type="ChEBI" id="CHEBI:58251"/>
        <dbReference type="EC" id="1.14.13.251"/>
    </reaction>
    <physiologicalReaction direction="left-to-right" evidence="1">
        <dbReference type="Rhea" id="RHEA:45701"/>
    </physiologicalReaction>
</comment>
<comment type="cofactor">
    <cofactor evidence="1">
        <name>FAD</name>
        <dbReference type="ChEBI" id="CHEBI:57692"/>
    </cofactor>
    <text evidence="1">Binds 1 FAD per subunit.</text>
</comment>
<comment type="cofactor">
    <cofactor evidence="1">
        <name>[2Fe-2S] cluster</name>
        <dbReference type="ChEBI" id="CHEBI:190135"/>
    </cofactor>
    <text evidence="1">Binds 1 2Fe-2S cluster per subunit.</text>
</comment>
<comment type="subunit">
    <text evidence="7">The system is composed of an oxygenase subunit (GbcA) and a reductase subunit (GbcB).</text>
</comment>
<comment type="induction">
    <text evidence="4">Transcriptionally regulated by GbdR.</text>
</comment>
<comment type="disruption phenotype">
    <text evidence="4">Deletion of gbcA and gbcB abrogates the ability to grow on glycine betaine as a sole carbon source.</text>
</comment>
<comment type="similarity">
    <text evidence="6">In the N-terminal section; belongs to the FAD-binding oxidoreductase type 6 family.</text>
</comment>
<reference key="1">
    <citation type="journal article" date="2000" name="Nature">
        <title>Complete genome sequence of Pseudomonas aeruginosa PAO1, an opportunistic pathogen.</title>
        <authorList>
            <person name="Stover C.K."/>
            <person name="Pham X.-Q.T."/>
            <person name="Erwin A.L."/>
            <person name="Mizoguchi S.D."/>
            <person name="Warrener P."/>
            <person name="Hickey M.J."/>
            <person name="Brinkman F.S.L."/>
            <person name="Hufnagle W.O."/>
            <person name="Kowalik D.J."/>
            <person name="Lagrou M."/>
            <person name="Garber R.L."/>
            <person name="Goltry L."/>
            <person name="Tolentino E."/>
            <person name="Westbrock-Wadman S."/>
            <person name="Yuan Y."/>
            <person name="Brody L.L."/>
            <person name="Coulter S.N."/>
            <person name="Folger K.R."/>
            <person name="Kas A."/>
            <person name="Larbig K."/>
            <person name="Lim R.M."/>
            <person name="Smith K.A."/>
            <person name="Spencer D.H."/>
            <person name="Wong G.K.-S."/>
            <person name="Wu Z."/>
            <person name="Paulsen I.T."/>
            <person name="Reizer J."/>
            <person name="Saier M.H. Jr."/>
            <person name="Hancock R.E.W."/>
            <person name="Lory S."/>
            <person name="Olson M.V."/>
        </authorList>
    </citation>
    <scope>NUCLEOTIDE SEQUENCE [LARGE SCALE GENOMIC DNA]</scope>
    <source>
        <strain>ATCC 15692 / DSM 22644 / CIP 104116 / JCM 14847 / LMG 12228 / 1C / PRS 101 / PAO1</strain>
    </source>
</reference>
<reference key="2">
    <citation type="journal article" date="2008" name="J. Bacteriol.">
        <title>Identification of two gene clusters and a transcriptional regulator required for Pseudomonas aeruginosa glycine betaine catabolism.</title>
        <authorList>
            <person name="Wargo M.J."/>
            <person name="Szwergold B.S."/>
            <person name="Hogan D.A."/>
        </authorList>
    </citation>
    <scope>FUNCTION</scope>
    <scope>INDUCTION</scope>
    <scope>DISRUPTION PHENOTYPE</scope>
    <source>
        <strain>ATCC 15692 / DSM 22644 / CIP 104116 / JCM 14847 / LMG 12228 / 1C / PRS 101 / PAO1</strain>
    </source>
</reference>
<gene>
    <name evidence="5" type="primary">gbcB</name>
    <name evidence="8" type="ordered locus">PA5411</name>
</gene>
<sequence>MSSNFLNPVTTQTWANGRHLVRCVKVIQETWDVRTFCFMADQPILFFFKPGQFVTLELEIDGEPVMRSYTISSSPSVPYSFSITIKRVPGGRVSNWLHDNLKEGQELPVHGPVGLFNAIDFPADKVLFLSGGVGITPVMSMARWFFDTNANVDMVFVHSARSPKDIIYHRELEHMASRIDNFSLHIICERHGLGEAWAGYRGYLNLRMLELIAPDFLEREIFCCGPTPYMSAVKHLLQGHGYDMSRYHEEAFGPTPPEVRADVRELAAEAAEAPEVPVADQHQVEFTATGKSIRVSPGETVHAAAAKLGLHIPKACGMGICGTCKVMKTAGEVEMEHNGGITDEDVAEGYILSCCSVPKGDVVIDY</sequence>
<protein>
    <recommendedName>
        <fullName evidence="6">Glycine betaine monooxygenase reductase subunit</fullName>
        <ecNumber evidence="1">1.14.13.251</ecNumber>
    </recommendedName>
    <alternativeName>
        <fullName evidence="5">Glycine betaine catabolism B</fullName>
    </alternativeName>
</protein>
<accession>Q9HTF3</accession>
<organism>
    <name type="scientific">Pseudomonas aeruginosa (strain ATCC 15692 / DSM 22644 / CIP 104116 / JCM 14847 / LMG 12228 / 1C / PRS 101 / PAO1)</name>
    <dbReference type="NCBI Taxonomy" id="208964"/>
    <lineage>
        <taxon>Bacteria</taxon>
        <taxon>Pseudomonadati</taxon>
        <taxon>Pseudomonadota</taxon>
        <taxon>Gammaproteobacteria</taxon>
        <taxon>Pseudomonadales</taxon>
        <taxon>Pseudomonadaceae</taxon>
        <taxon>Pseudomonas</taxon>
    </lineage>
</organism>
<evidence type="ECO:0000250" key="1">
    <source>
        <dbReference type="UniProtKB" id="Q1QYU6"/>
    </source>
</evidence>
<evidence type="ECO:0000255" key="2">
    <source>
        <dbReference type="PROSITE-ProRule" id="PRU00465"/>
    </source>
</evidence>
<evidence type="ECO:0000255" key="3">
    <source>
        <dbReference type="PROSITE-ProRule" id="PRU00716"/>
    </source>
</evidence>
<evidence type="ECO:0000269" key="4">
    <source>
    </source>
</evidence>
<evidence type="ECO:0000303" key="5">
    <source>
    </source>
</evidence>
<evidence type="ECO:0000305" key="6"/>
<evidence type="ECO:0000305" key="7">
    <source>
    </source>
</evidence>
<evidence type="ECO:0000312" key="8">
    <source>
        <dbReference type="EMBL" id="AAG08796.1"/>
    </source>
</evidence>
<feature type="chain" id="PRO_0000459097" description="Glycine betaine monooxygenase reductase subunit">
    <location>
        <begin position="1"/>
        <end position="366"/>
    </location>
</feature>
<feature type="domain" description="FAD-binding FR-type" evidence="3">
    <location>
        <begin position="16"/>
        <end position="119"/>
    </location>
</feature>
<feature type="domain" description="2Fe-2S ferredoxin-type" evidence="2">
    <location>
        <begin position="282"/>
        <end position="366"/>
    </location>
</feature>
<feature type="binding site" evidence="2">
    <location>
        <position position="316"/>
    </location>
    <ligand>
        <name>[2Fe-2S] cluster</name>
        <dbReference type="ChEBI" id="CHEBI:190135"/>
    </ligand>
</feature>
<feature type="binding site" evidence="2">
    <location>
        <position position="321"/>
    </location>
    <ligand>
        <name>[2Fe-2S] cluster</name>
        <dbReference type="ChEBI" id="CHEBI:190135"/>
    </ligand>
</feature>
<feature type="binding site" evidence="2">
    <location>
        <position position="324"/>
    </location>
    <ligand>
        <name>[2Fe-2S] cluster</name>
        <dbReference type="ChEBI" id="CHEBI:190135"/>
    </ligand>
</feature>
<feature type="binding site" evidence="2">
    <location>
        <position position="354"/>
    </location>
    <ligand>
        <name>[2Fe-2S] cluster</name>
        <dbReference type="ChEBI" id="CHEBI:190135"/>
    </ligand>
</feature>
<proteinExistence type="evidence at transcript level"/>
<dbReference type="EC" id="1.14.13.251" evidence="1"/>
<dbReference type="EMBL" id="AE004091">
    <property type="protein sequence ID" value="AAG08796.1"/>
    <property type="molecule type" value="Genomic_DNA"/>
</dbReference>
<dbReference type="PIR" id="G82970">
    <property type="entry name" value="G82970"/>
</dbReference>
<dbReference type="RefSeq" id="NP_254098.1">
    <property type="nucleotide sequence ID" value="NC_002516.2"/>
</dbReference>
<dbReference type="RefSeq" id="WP_003096769.1">
    <property type="nucleotide sequence ID" value="NZ_QZGE01000031.1"/>
</dbReference>
<dbReference type="SMR" id="Q9HTF3"/>
<dbReference type="FunCoup" id="Q9HTF3">
    <property type="interactions" value="314"/>
</dbReference>
<dbReference type="STRING" id="208964.PA5411"/>
<dbReference type="PaxDb" id="208964-PA5411"/>
<dbReference type="GeneID" id="77223947"/>
<dbReference type="GeneID" id="880070"/>
<dbReference type="KEGG" id="pae:PA5411"/>
<dbReference type="PATRIC" id="fig|208964.12.peg.5671"/>
<dbReference type="PseudoCAP" id="PA5411"/>
<dbReference type="HOGENOM" id="CLU_003827_14_3_6"/>
<dbReference type="InParanoid" id="Q9HTF3"/>
<dbReference type="OrthoDB" id="9796486at2"/>
<dbReference type="PhylomeDB" id="Q9HTF3"/>
<dbReference type="BioCyc" id="MetaCyc:MONOMER-21822"/>
<dbReference type="BioCyc" id="PAER208964:G1FZ6-5538-MONOMER"/>
<dbReference type="Proteomes" id="UP000002438">
    <property type="component" value="Chromosome"/>
</dbReference>
<dbReference type="GO" id="GO:0051537">
    <property type="term" value="F:2 iron, 2 sulfur cluster binding"/>
    <property type="evidence" value="ECO:0007669"/>
    <property type="project" value="UniProtKB-KW"/>
</dbReference>
<dbReference type="GO" id="GO:0046872">
    <property type="term" value="F:metal ion binding"/>
    <property type="evidence" value="ECO:0007669"/>
    <property type="project" value="UniProtKB-KW"/>
</dbReference>
<dbReference type="GO" id="GO:0004497">
    <property type="term" value="F:monooxygenase activity"/>
    <property type="evidence" value="ECO:0007669"/>
    <property type="project" value="UniProtKB-KW"/>
</dbReference>
<dbReference type="GO" id="GO:0016491">
    <property type="term" value="F:oxidoreductase activity"/>
    <property type="evidence" value="ECO:0000314"/>
    <property type="project" value="PseudoCAP"/>
</dbReference>
<dbReference type="GO" id="GO:0031457">
    <property type="term" value="P:glycine betaine catabolic process"/>
    <property type="evidence" value="ECO:0000315"/>
    <property type="project" value="PseudoCAP"/>
</dbReference>
<dbReference type="CDD" id="cd00207">
    <property type="entry name" value="fer2"/>
    <property type="match status" value="1"/>
</dbReference>
<dbReference type="CDD" id="cd06215">
    <property type="entry name" value="FNR_iron_sulfur_binding_1"/>
    <property type="match status" value="1"/>
</dbReference>
<dbReference type="FunFam" id="3.10.20.30:FF:000041">
    <property type="entry name" value="Glycine-betaine demethylase subunit GbcB"/>
    <property type="match status" value="1"/>
</dbReference>
<dbReference type="FunFam" id="3.40.50.80:FF:000056">
    <property type="entry name" value="Probable ferredoxin"/>
    <property type="match status" value="1"/>
</dbReference>
<dbReference type="Gene3D" id="3.10.20.30">
    <property type="match status" value="1"/>
</dbReference>
<dbReference type="Gene3D" id="3.40.50.80">
    <property type="entry name" value="Nucleotide-binding domain of ferredoxin-NADP reductase (FNR) module"/>
    <property type="match status" value="1"/>
</dbReference>
<dbReference type="Gene3D" id="2.40.30.10">
    <property type="entry name" value="Translation factors"/>
    <property type="match status" value="1"/>
</dbReference>
<dbReference type="InterPro" id="IPR036010">
    <property type="entry name" value="2Fe-2S_ferredoxin-like_sf"/>
</dbReference>
<dbReference type="InterPro" id="IPR001041">
    <property type="entry name" value="2Fe-2S_ferredoxin-type"/>
</dbReference>
<dbReference type="InterPro" id="IPR006058">
    <property type="entry name" value="2Fe2S_fd_BS"/>
</dbReference>
<dbReference type="InterPro" id="IPR012675">
    <property type="entry name" value="Beta-grasp_dom_sf"/>
</dbReference>
<dbReference type="InterPro" id="IPR008333">
    <property type="entry name" value="Cbr1-like_FAD-bd_dom"/>
</dbReference>
<dbReference type="InterPro" id="IPR017927">
    <property type="entry name" value="FAD-bd_FR_type"/>
</dbReference>
<dbReference type="InterPro" id="IPR001709">
    <property type="entry name" value="Flavoprot_Pyr_Nucl_cyt_Rdtase"/>
</dbReference>
<dbReference type="InterPro" id="IPR039261">
    <property type="entry name" value="FNR_nucleotide-bd"/>
</dbReference>
<dbReference type="InterPro" id="IPR050415">
    <property type="entry name" value="MRET"/>
</dbReference>
<dbReference type="InterPro" id="IPR001433">
    <property type="entry name" value="OxRdtase_FAD/NAD-bd"/>
</dbReference>
<dbReference type="InterPro" id="IPR017938">
    <property type="entry name" value="Riboflavin_synthase-like_b-brl"/>
</dbReference>
<dbReference type="PANTHER" id="PTHR47354">
    <property type="entry name" value="NADH OXIDOREDUCTASE HCR"/>
    <property type="match status" value="1"/>
</dbReference>
<dbReference type="PANTHER" id="PTHR47354:SF6">
    <property type="entry name" value="NADH OXIDOREDUCTASE HCR"/>
    <property type="match status" value="1"/>
</dbReference>
<dbReference type="Pfam" id="PF00970">
    <property type="entry name" value="FAD_binding_6"/>
    <property type="match status" value="1"/>
</dbReference>
<dbReference type="Pfam" id="PF00111">
    <property type="entry name" value="Fer2"/>
    <property type="match status" value="1"/>
</dbReference>
<dbReference type="Pfam" id="PF00175">
    <property type="entry name" value="NAD_binding_1"/>
    <property type="match status" value="1"/>
</dbReference>
<dbReference type="PRINTS" id="PR00406">
    <property type="entry name" value="CYTB5RDTASE"/>
</dbReference>
<dbReference type="PRINTS" id="PR00371">
    <property type="entry name" value="FPNCR"/>
</dbReference>
<dbReference type="SUPFAM" id="SSF54292">
    <property type="entry name" value="2Fe-2S ferredoxin-like"/>
    <property type="match status" value="1"/>
</dbReference>
<dbReference type="SUPFAM" id="SSF52343">
    <property type="entry name" value="Ferredoxin reductase-like, C-terminal NADP-linked domain"/>
    <property type="match status" value="1"/>
</dbReference>
<dbReference type="SUPFAM" id="SSF63380">
    <property type="entry name" value="Riboflavin synthase domain-like"/>
    <property type="match status" value="1"/>
</dbReference>
<dbReference type="PROSITE" id="PS00197">
    <property type="entry name" value="2FE2S_FER_1"/>
    <property type="match status" value="1"/>
</dbReference>
<dbReference type="PROSITE" id="PS51085">
    <property type="entry name" value="2FE2S_FER_2"/>
    <property type="match status" value="1"/>
</dbReference>
<dbReference type="PROSITE" id="PS51384">
    <property type="entry name" value="FAD_FR"/>
    <property type="match status" value="1"/>
</dbReference>